<sequence>MILLPDENWRWVFDEQRQSLLLDLSDDMQFVVSVPPKQLAQKQAFTEHFSLDDSSLYFHFLECLGEFPFTDPERVQIVLNAVAAVKYTRPLVSQSWYYRDVDMLSGEPELGEVFSVVTEFTYGDVMIISPGSNASLCIVISQAIQLDADKSLRQSSVCKLMNSKLLPYQAATQYLSKMA</sequence>
<name>ZAPC_TOLAT</name>
<keyword id="KW-0131">Cell cycle</keyword>
<keyword id="KW-0132">Cell division</keyword>
<keyword id="KW-0963">Cytoplasm</keyword>
<keyword id="KW-1185">Reference proteome</keyword>
<keyword id="KW-0717">Septation</keyword>
<proteinExistence type="inferred from homology"/>
<protein>
    <recommendedName>
        <fullName evidence="1">Cell division protein ZapC</fullName>
    </recommendedName>
</protein>
<comment type="function">
    <text evidence="1">Contributes to the efficiency of the cell division process by stabilizing the polymeric form of the cell division protein FtsZ. Acts by promoting interactions between FtsZ protofilaments and suppressing the GTPase activity of FtsZ.</text>
</comment>
<comment type="subunit">
    <text evidence="1">Interacts directly with FtsZ.</text>
</comment>
<comment type="subcellular location">
    <subcellularLocation>
        <location evidence="1">Cytoplasm</location>
    </subcellularLocation>
</comment>
<comment type="similarity">
    <text evidence="1">Belongs to the ZapC family.</text>
</comment>
<evidence type="ECO:0000255" key="1">
    <source>
        <dbReference type="HAMAP-Rule" id="MF_00906"/>
    </source>
</evidence>
<organism>
    <name type="scientific">Tolumonas auensis (strain DSM 9187 / NBRC 110442 / TA 4)</name>
    <dbReference type="NCBI Taxonomy" id="595494"/>
    <lineage>
        <taxon>Bacteria</taxon>
        <taxon>Pseudomonadati</taxon>
        <taxon>Pseudomonadota</taxon>
        <taxon>Gammaproteobacteria</taxon>
        <taxon>Aeromonadales</taxon>
        <taxon>Aeromonadaceae</taxon>
        <taxon>Tolumonas</taxon>
    </lineage>
</organism>
<dbReference type="EMBL" id="CP001616">
    <property type="protein sequence ID" value="ACQ93155.1"/>
    <property type="molecule type" value="Genomic_DNA"/>
</dbReference>
<dbReference type="SMR" id="C4LEY8"/>
<dbReference type="STRING" id="595494.Tola_1544"/>
<dbReference type="KEGG" id="tau:Tola_1544"/>
<dbReference type="eggNOG" id="ENOG502Z8AH">
    <property type="taxonomic scope" value="Bacteria"/>
</dbReference>
<dbReference type="HOGENOM" id="CLU_128248_0_0_6"/>
<dbReference type="Proteomes" id="UP000009073">
    <property type="component" value="Chromosome"/>
</dbReference>
<dbReference type="GO" id="GO:0005737">
    <property type="term" value="C:cytoplasm"/>
    <property type="evidence" value="ECO:0007669"/>
    <property type="project" value="UniProtKB-SubCell"/>
</dbReference>
<dbReference type="GO" id="GO:0000917">
    <property type="term" value="P:division septum assembly"/>
    <property type="evidence" value="ECO:0007669"/>
    <property type="project" value="UniProtKB-KW"/>
</dbReference>
<dbReference type="GO" id="GO:0043093">
    <property type="term" value="P:FtsZ-dependent cytokinesis"/>
    <property type="evidence" value="ECO:0007669"/>
    <property type="project" value="UniProtKB-UniRule"/>
</dbReference>
<dbReference type="HAMAP" id="MF_00906">
    <property type="entry name" value="ZapC"/>
    <property type="match status" value="1"/>
</dbReference>
<dbReference type="InterPro" id="IPR009809">
    <property type="entry name" value="ZapC"/>
</dbReference>
<dbReference type="InterPro" id="IPR048372">
    <property type="entry name" value="ZapC_C"/>
</dbReference>
<dbReference type="InterPro" id="IPR048373">
    <property type="entry name" value="ZapC_N"/>
</dbReference>
<dbReference type="Pfam" id="PF07126">
    <property type="entry name" value="ZapC_C"/>
    <property type="match status" value="1"/>
</dbReference>
<dbReference type="Pfam" id="PF21083">
    <property type="entry name" value="ZapC_N"/>
    <property type="match status" value="1"/>
</dbReference>
<dbReference type="PIRSF" id="PIRSF010252">
    <property type="entry name" value="ZapC"/>
    <property type="match status" value="1"/>
</dbReference>
<feature type="chain" id="PRO_0000413791" description="Cell division protein ZapC">
    <location>
        <begin position="1"/>
        <end position="179"/>
    </location>
</feature>
<reference key="1">
    <citation type="submission" date="2009-05" db="EMBL/GenBank/DDBJ databases">
        <title>Complete sequence of Tolumonas auensis DSM 9187.</title>
        <authorList>
            <consortium name="US DOE Joint Genome Institute"/>
            <person name="Lucas S."/>
            <person name="Copeland A."/>
            <person name="Lapidus A."/>
            <person name="Glavina del Rio T."/>
            <person name="Tice H."/>
            <person name="Bruce D."/>
            <person name="Goodwin L."/>
            <person name="Pitluck S."/>
            <person name="Chertkov O."/>
            <person name="Brettin T."/>
            <person name="Detter J.C."/>
            <person name="Han C."/>
            <person name="Larimer F."/>
            <person name="Land M."/>
            <person name="Hauser L."/>
            <person name="Kyrpides N."/>
            <person name="Mikhailova N."/>
            <person name="Spring S."/>
            <person name="Beller H."/>
        </authorList>
    </citation>
    <scope>NUCLEOTIDE SEQUENCE [LARGE SCALE GENOMIC DNA]</scope>
    <source>
        <strain>DSM 9187 / NBRC 110442 / TA 4</strain>
    </source>
</reference>
<accession>C4LEY8</accession>
<gene>
    <name evidence="1" type="primary">zapC</name>
    <name type="ordered locus">Tola_1544</name>
</gene>